<evidence type="ECO:0000255" key="1">
    <source>
        <dbReference type="HAMAP-Rule" id="MF_00059"/>
    </source>
</evidence>
<gene>
    <name evidence="1" type="primary">rpoA</name>
    <name type="ordered locus">NMC0158</name>
</gene>
<keyword id="KW-0240">DNA-directed RNA polymerase</keyword>
<keyword id="KW-0548">Nucleotidyltransferase</keyword>
<keyword id="KW-0804">Transcription</keyword>
<keyword id="KW-0808">Transferase</keyword>
<accession>A1KRJ9</accession>
<organism>
    <name type="scientific">Neisseria meningitidis serogroup C / serotype 2a (strain ATCC 700532 / DSM 15464 / FAM18)</name>
    <dbReference type="NCBI Taxonomy" id="272831"/>
    <lineage>
        <taxon>Bacteria</taxon>
        <taxon>Pseudomonadati</taxon>
        <taxon>Pseudomonadota</taxon>
        <taxon>Betaproteobacteria</taxon>
        <taxon>Neisseriales</taxon>
        <taxon>Neisseriaceae</taxon>
        <taxon>Neisseria</taxon>
    </lineage>
</organism>
<proteinExistence type="inferred from homology"/>
<feature type="chain" id="PRO_0000296841" description="DNA-directed RNA polymerase subunit alpha">
    <location>
        <begin position="1"/>
        <end position="328"/>
    </location>
</feature>
<feature type="region of interest" description="Alpha N-terminal domain (alpha-NTD)" evidence="1">
    <location>
        <begin position="1"/>
        <end position="234"/>
    </location>
</feature>
<feature type="region of interest" description="Alpha C-terminal domain (alpha-CTD)" evidence="1">
    <location>
        <begin position="248"/>
        <end position="328"/>
    </location>
</feature>
<reference key="1">
    <citation type="journal article" date="2007" name="PLoS Genet.">
        <title>Meningococcal genetic variation mechanisms viewed through comparative analysis of serogroup C strain FAM18.</title>
        <authorList>
            <person name="Bentley S.D."/>
            <person name="Vernikos G.S."/>
            <person name="Snyder L.A.S."/>
            <person name="Churcher C."/>
            <person name="Arrowsmith C."/>
            <person name="Chillingworth T."/>
            <person name="Cronin A."/>
            <person name="Davis P.H."/>
            <person name="Holroyd N.E."/>
            <person name="Jagels K."/>
            <person name="Maddison M."/>
            <person name="Moule S."/>
            <person name="Rabbinowitsch E."/>
            <person name="Sharp S."/>
            <person name="Unwin L."/>
            <person name="Whitehead S."/>
            <person name="Quail M.A."/>
            <person name="Achtman M."/>
            <person name="Barrell B.G."/>
            <person name="Saunders N.J."/>
            <person name="Parkhill J."/>
        </authorList>
    </citation>
    <scope>NUCLEOTIDE SEQUENCE [LARGE SCALE GENOMIC DNA]</scope>
    <source>
        <strain>ATCC 700532 / DSM 15464 / FAM18</strain>
    </source>
</reference>
<sequence>MQNSTTEFLKPRQIDVNTFSATRAKVSMQPFERGFGHTLGNALRRILLSSMNGFAPTEVAIAGVLHEYSTVDGIQEDVVDILLNIKGIVFKLHGRSQVQLVLKKSGSGVVSAGDIELPHDVEILNPGHVICHLADNGQIEMEIKVEQGRGYQSVSGRQVVRDENRQIGAIQLDASFSPISRVSFEVEPARVEQRTDLDKLVLDIETDGSIDPEEAVRSAARILIDQMSIFADLQGTPVEEVEEKAPPIDPVLLRPVDDLELTVRSANCLKAEDIYYIGDLIQRTETELLKTPNLGRKSLNEIKEVLASKGLTLGSKLEAWPPVGLEKP</sequence>
<comment type="function">
    <text evidence="1">DNA-dependent RNA polymerase catalyzes the transcription of DNA into RNA using the four ribonucleoside triphosphates as substrates.</text>
</comment>
<comment type="catalytic activity">
    <reaction evidence="1">
        <text>RNA(n) + a ribonucleoside 5'-triphosphate = RNA(n+1) + diphosphate</text>
        <dbReference type="Rhea" id="RHEA:21248"/>
        <dbReference type="Rhea" id="RHEA-COMP:14527"/>
        <dbReference type="Rhea" id="RHEA-COMP:17342"/>
        <dbReference type="ChEBI" id="CHEBI:33019"/>
        <dbReference type="ChEBI" id="CHEBI:61557"/>
        <dbReference type="ChEBI" id="CHEBI:140395"/>
        <dbReference type="EC" id="2.7.7.6"/>
    </reaction>
</comment>
<comment type="subunit">
    <text evidence="1">Homodimer. The RNAP catalytic core consists of 2 alpha, 1 beta, 1 beta' and 1 omega subunit. When a sigma factor is associated with the core the holoenzyme is formed, which can initiate transcription.</text>
</comment>
<comment type="domain">
    <text evidence="1">The N-terminal domain is essential for RNAP assembly and basal transcription, whereas the C-terminal domain is involved in interaction with transcriptional regulators and with upstream promoter elements.</text>
</comment>
<comment type="similarity">
    <text evidence="1">Belongs to the RNA polymerase alpha chain family.</text>
</comment>
<name>RPOA_NEIMF</name>
<dbReference type="EC" id="2.7.7.6" evidence="1"/>
<dbReference type="EMBL" id="AM421808">
    <property type="protein sequence ID" value="CAM09477.1"/>
    <property type="molecule type" value="Genomic_DNA"/>
</dbReference>
<dbReference type="RefSeq" id="WP_002215457.1">
    <property type="nucleotide sequence ID" value="NC_008767.1"/>
</dbReference>
<dbReference type="SMR" id="A1KRJ9"/>
<dbReference type="GeneID" id="93387243"/>
<dbReference type="KEGG" id="nmc:NMC0158"/>
<dbReference type="HOGENOM" id="CLU_053084_0_0_4"/>
<dbReference type="Proteomes" id="UP000002286">
    <property type="component" value="Chromosome"/>
</dbReference>
<dbReference type="GO" id="GO:0005737">
    <property type="term" value="C:cytoplasm"/>
    <property type="evidence" value="ECO:0007669"/>
    <property type="project" value="UniProtKB-ARBA"/>
</dbReference>
<dbReference type="GO" id="GO:0000428">
    <property type="term" value="C:DNA-directed RNA polymerase complex"/>
    <property type="evidence" value="ECO:0007669"/>
    <property type="project" value="UniProtKB-KW"/>
</dbReference>
<dbReference type="GO" id="GO:0003677">
    <property type="term" value="F:DNA binding"/>
    <property type="evidence" value="ECO:0007669"/>
    <property type="project" value="UniProtKB-UniRule"/>
</dbReference>
<dbReference type="GO" id="GO:0003899">
    <property type="term" value="F:DNA-directed RNA polymerase activity"/>
    <property type="evidence" value="ECO:0007669"/>
    <property type="project" value="UniProtKB-UniRule"/>
</dbReference>
<dbReference type="GO" id="GO:0046983">
    <property type="term" value="F:protein dimerization activity"/>
    <property type="evidence" value="ECO:0007669"/>
    <property type="project" value="InterPro"/>
</dbReference>
<dbReference type="GO" id="GO:0006351">
    <property type="term" value="P:DNA-templated transcription"/>
    <property type="evidence" value="ECO:0007669"/>
    <property type="project" value="UniProtKB-UniRule"/>
</dbReference>
<dbReference type="CDD" id="cd06928">
    <property type="entry name" value="RNAP_alpha_NTD"/>
    <property type="match status" value="1"/>
</dbReference>
<dbReference type="FunFam" id="1.10.150.20:FF:000001">
    <property type="entry name" value="DNA-directed RNA polymerase subunit alpha"/>
    <property type="match status" value="1"/>
</dbReference>
<dbReference type="FunFam" id="2.170.120.12:FF:000001">
    <property type="entry name" value="DNA-directed RNA polymerase subunit alpha"/>
    <property type="match status" value="1"/>
</dbReference>
<dbReference type="Gene3D" id="1.10.150.20">
    <property type="entry name" value="5' to 3' exonuclease, C-terminal subdomain"/>
    <property type="match status" value="1"/>
</dbReference>
<dbReference type="Gene3D" id="2.170.120.12">
    <property type="entry name" value="DNA-directed RNA polymerase, insert domain"/>
    <property type="match status" value="1"/>
</dbReference>
<dbReference type="Gene3D" id="3.30.1360.10">
    <property type="entry name" value="RNA polymerase, RBP11-like subunit"/>
    <property type="match status" value="1"/>
</dbReference>
<dbReference type="HAMAP" id="MF_00059">
    <property type="entry name" value="RNApol_bact_RpoA"/>
    <property type="match status" value="1"/>
</dbReference>
<dbReference type="InterPro" id="IPR011262">
    <property type="entry name" value="DNA-dir_RNA_pol_insert"/>
</dbReference>
<dbReference type="InterPro" id="IPR011263">
    <property type="entry name" value="DNA-dir_RNA_pol_RpoA/D/Rpb3"/>
</dbReference>
<dbReference type="InterPro" id="IPR011773">
    <property type="entry name" value="DNA-dir_RpoA"/>
</dbReference>
<dbReference type="InterPro" id="IPR036603">
    <property type="entry name" value="RBP11-like"/>
</dbReference>
<dbReference type="InterPro" id="IPR011260">
    <property type="entry name" value="RNAP_asu_C"/>
</dbReference>
<dbReference type="InterPro" id="IPR036643">
    <property type="entry name" value="RNApol_insert_sf"/>
</dbReference>
<dbReference type="NCBIfam" id="NF003513">
    <property type="entry name" value="PRK05182.1-2"/>
    <property type="match status" value="1"/>
</dbReference>
<dbReference type="NCBIfam" id="NF003519">
    <property type="entry name" value="PRK05182.2-5"/>
    <property type="match status" value="1"/>
</dbReference>
<dbReference type="NCBIfam" id="TIGR02027">
    <property type="entry name" value="rpoA"/>
    <property type="match status" value="1"/>
</dbReference>
<dbReference type="Pfam" id="PF01000">
    <property type="entry name" value="RNA_pol_A_bac"/>
    <property type="match status" value="1"/>
</dbReference>
<dbReference type="Pfam" id="PF03118">
    <property type="entry name" value="RNA_pol_A_CTD"/>
    <property type="match status" value="1"/>
</dbReference>
<dbReference type="Pfam" id="PF01193">
    <property type="entry name" value="RNA_pol_L"/>
    <property type="match status" value="1"/>
</dbReference>
<dbReference type="SMART" id="SM00662">
    <property type="entry name" value="RPOLD"/>
    <property type="match status" value="1"/>
</dbReference>
<dbReference type="SUPFAM" id="SSF47789">
    <property type="entry name" value="C-terminal domain of RNA polymerase alpha subunit"/>
    <property type="match status" value="1"/>
</dbReference>
<dbReference type="SUPFAM" id="SSF56553">
    <property type="entry name" value="Insert subdomain of RNA polymerase alpha subunit"/>
    <property type="match status" value="1"/>
</dbReference>
<dbReference type="SUPFAM" id="SSF55257">
    <property type="entry name" value="RBP11-like subunits of RNA polymerase"/>
    <property type="match status" value="1"/>
</dbReference>
<protein>
    <recommendedName>
        <fullName evidence="1">DNA-directed RNA polymerase subunit alpha</fullName>
        <shortName evidence="1">RNAP subunit alpha</shortName>
        <ecNumber evidence="1">2.7.7.6</ecNumber>
    </recommendedName>
    <alternativeName>
        <fullName evidence="1">RNA polymerase subunit alpha</fullName>
    </alternativeName>
    <alternativeName>
        <fullName evidence="1">Transcriptase subunit alpha</fullName>
    </alternativeName>
</protein>